<feature type="chain" id="PRO_1000114204" description="Cell division topological specificity factor">
    <location>
        <begin position="1"/>
        <end position="84"/>
    </location>
</feature>
<gene>
    <name evidence="1" type="primary">minE</name>
    <name type="ordered locus">BamMC406_0857</name>
</gene>
<organism>
    <name type="scientific">Burkholderia ambifaria (strain MC40-6)</name>
    <dbReference type="NCBI Taxonomy" id="398577"/>
    <lineage>
        <taxon>Bacteria</taxon>
        <taxon>Pseudomonadati</taxon>
        <taxon>Pseudomonadota</taxon>
        <taxon>Betaproteobacteria</taxon>
        <taxon>Burkholderiales</taxon>
        <taxon>Burkholderiaceae</taxon>
        <taxon>Burkholderia</taxon>
        <taxon>Burkholderia cepacia complex</taxon>
    </lineage>
</organism>
<comment type="function">
    <text evidence="1">Prevents the cell division inhibition by proteins MinC and MinD at internal division sites while permitting inhibition at polar sites. This ensures cell division at the proper site by restricting the formation of a division septum at the midpoint of the long axis of the cell.</text>
</comment>
<comment type="similarity">
    <text evidence="1">Belongs to the MinE family.</text>
</comment>
<protein>
    <recommendedName>
        <fullName evidence="1">Cell division topological specificity factor</fullName>
    </recommendedName>
</protein>
<name>MINE_BURA4</name>
<evidence type="ECO:0000255" key="1">
    <source>
        <dbReference type="HAMAP-Rule" id="MF_00262"/>
    </source>
</evidence>
<reference key="1">
    <citation type="submission" date="2008-04" db="EMBL/GenBank/DDBJ databases">
        <title>Complete sequence of chromosome 1 of Burkholderia ambifaria MC40-6.</title>
        <authorList>
            <person name="Copeland A."/>
            <person name="Lucas S."/>
            <person name="Lapidus A."/>
            <person name="Glavina del Rio T."/>
            <person name="Dalin E."/>
            <person name="Tice H."/>
            <person name="Pitluck S."/>
            <person name="Chain P."/>
            <person name="Malfatti S."/>
            <person name="Shin M."/>
            <person name="Vergez L."/>
            <person name="Lang D."/>
            <person name="Schmutz J."/>
            <person name="Larimer F."/>
            <person name="Land M."/>
            <person name="Hauser L."/>
            <person name="Kyrpides N."/>
            <person name="Lykidis A."/>
            <person name="Ramette A."/>
            <person name="Konstantinidis K."/>
            <person name="Tiedje J."/>
            <person name="Richardson P."/>
        </authorList>
    </citation>
    <scope>NUCLEOTIDE SEQUENCE [LARGE SCALE GENOMIC DNA]</scope>
    <source>
        <strain>MC40-6</strain>
    </source>
</reference>
<sequence>MSILSFLLGEKKKSASVAKERLQLIIAHERVGGRPPADYLPALQKELVAVISKYVRISNDDIRVSLERQDDLEVLEVKIEIPQA</sequence>
<dbReference type="EMBL" id="CP001025">
    <property type="protein sequence ID" value="ACB63348.1"/>
    <property type="molecule type" value="Genomic_DNA"/>
</dbReference>
<dbReference type="RefSeq" id="WP_006750836.1">
    <property type="nucleotide sequence ID" value="NC_010551.1"/>
</dbReference>
<dbReference type="SMR" id="B1YUM1"/>
<dbReference type="GeneID" id="93083747"/>
<dbReference type="KEGG" id="bac:BamMC406_0857"/>
<dbReference type="HOGENOM" id="CLU_137929_2_1_4"/>
<dbReference type="OrthoDB" id="9802655at2"/>
<dbReference type="Proteomes" id="UP000001680">
    <property type="component" value="Chromosome 1"/>
</dbReference>
<dbReference type="GO" id="GO:0051301">
    <property type="term" value="P:cell division"/>
    <property type="evidence" value="ECO:0007669"/>
    <property type="project" value="UniProtKB-KW"/>
</dbReference>
<dbReference type="GO" id="GO:0032955">
    <property type="term" value="P:regulation of division septum assembly"/>
    <property type="evidence" value="ECO:0007669"/>
    <property type="project" value="InterPro"/>
</dbReference>
<dbReference type="FunFam" id="3.30.1070.10:FF:000001">
    <property type="entry name" value="Cell division topological specificity factor"/>
    <property type="match status" value="1"/>
</dbReference>
<dbReference type="Gene3D" id="3.30.1070.10">
    <property type="entry name" value="Cell division topological specificity factor MinE"/>
    <property type="match status" value="1"/>
</dbReference>
<dbReference type="HAMAP" id="MF_00262">
    <property type="entry name" value="MinE"/>
    <property type="match status" value="1"/>
</dbReference>
<dbReference type="InterPro" id="IPR005527">
    <property type="entry name" value="MinE"/>
</dbReference>
<dbReference type="InterPro" id="IPR036707">
    <property type="entry name" value="MinE_sf"/>
</dbReference>
<dbReference type="NCBIfam" id="TIGR01215">
    <property type="entry name" value="minE"/>
    <property type="match status" value="1"/>
</dbReference>
<dbReference type="NCBIfam" id="NF001422">
    <property type="entry name" value="PRK00296.1"/>
    <property type="match status" value="1"/>
</dbReference>
<dbReference type="NCBIfam" id="NF010595">
    <property type="entry name" value="PRK13989.1"/>
    <property type="match status" value="1"/>
</dbReference>
<dbReference type="Pfam" id="PF03776">
    <property type="entry name" value="MinE"/>
    <property type="match status" value="1"/>
</dbReference>
<dbReference type="SUPFAM" id="SSF55229">
    <property type="entry name" value="Cell division protein MinE topological specificity domain"/>
    <property type="match status" value="1"/>
</dbReference>
<keyword id="KW-0131">Cell cycle</keyword>
<keyword id="KW-0132">Cell division</keyword>
<proteinExistence type="inferred from homology"/>
<accession>B1YUM1</accession>